<proteinExistence type="inferred from homology"/>
<keyword id="KW-0963">Cytoplasm</keyword>
<keyword id="KW-0227">DNA damage</keyword>
<keyword id="KW-0234">DNA repair</keyword>
<keyword id="KW-0235">DNA replication</keyword>
<keyword id="KW-0238">DNA-binding</keyword>
<keyword id="KW-0239">DNA-directed DNA polymerase</keyword>
<keyword id="KW-0460">Magnesium</keyword>
<keyword id="KW-0479">Metal-binding</keyword>
<keyword id="KW-0515">Mutator protein</keyword>
<keyword id="KW-0548">Nucleotidyltransferase</keyword>
<keyword id="KW-0808">Transferase</keyword>
<feature type="chain" id="PRO_1000164007" description="DNA polymerase IV">
    <location>
        <begin position="1"/>
        <end position="360"/>
    </location>
</feature>
<feature type="domain" description="UmuC" evidence="1">
    <location>
        <begin position="8"/>
        <end position="189"/>
    </location>
</feature>
<feature type="active site" evidence="1">
    <location>
        <position position="108"/>
    </location>
</feature>
<feature type="binding site" evidence="1">
    <location>
        <position position="12"/>
    </location>
    <ligand>
        <name>Mg(2+)</name>
        <dbReference type="ChEBI" id="CHEBI:18420"/>
    </ligand>
</feature>
<feature type="binding site" evidence="1">
    <location>
        <position position="107"/>
    </location>
    <ligand>
        <name>Mg(2+)</name>
        <dbReference type="ChEBI" id="CHEBI:18420"/>
    </ligand>
</feature>
<feature type="site" description="Substrate discrimination" evidence="1">
    <location>
        <position position="17"/>
    </location>
</feature>
<reference key="1">
    <citation type="journal article" date="2008" name="PLoS ONE">
        <title>A recalibrated molecular clock and independent origins for the cholera pandemic clones.</title>
        <authorList>
            <person name="Feng L."/>
            <person name="Reeves P.R."/>
            <person name="Lan R."/>
            <person name="Ren Y."/>
            <person name="Gao C."/>
            <person name="Zhou Z."/>
            <person name="Ren Y."/>
            <person name="Cheng J."/>
            <person name="Wang W."/>
            <person name="Wang J."/>
            <person name="Qian W."/>
            <person name="Li D."/>
            <person name="Wang L."/>
        </authorList>
    </citation>
    <scope>NUCLEOTIDE SEQUENCE [LARGE SCALE GENOMIC DNA]</scope>
    <source>
        <strain>M66-2</strain>
    </source>
</reference>
<name>DPO4_VIBCM</name>
<protein>
    <recommendedName>
        <fullName evidence="1">DNA polymerase IV</fullName>
        <shortName evidence="1">Pol IV</shortName>
        <ecNumber evidence="1">2.7.7.7</ecNumber>
    </recommendedName>
</protein>
<accession>C3LQ59</accession>
<evidence type="ECO:0000255" key="1">
    <source>
        <dbReference type="HAMAP-Rule" id="MF_01113"/>
    </source>
</evidence>
<gene>
    <name evidence="1" type="primary">dinB</name>
    <name type="ordered locus">VCM66_2210</name>
</gene>
<sequence>MQDRIRKIIHVDMDCFFAAVEMRDNPAYREIALAVGGHEKQRGVISTCNYQARKFGVRSAMPTAQALKLCPQLHVVPGRMSVYKSVSQQIQTIFQRYTSLIEPLSLDEAYLDVSESTAYQGSATLIAQAIRRDIWQELNLTASAGVAPIKFLAKVASDLNKPDGLYVVTPDKVQEMVDSLPLEKIPGVGKVALEKLHQAGLYVGADVRRADYRKLLHQFGRLGASLWKKSHGIDEREVVTERERKSVGVEYTFSQNISTFQECWQVIEQKLYPELDARLSRAHPQRGIIKQGIKVKFADFQQTTIEHVHPALELDYFHELLEQVLTRQQGREIRLLGLSVMLKPELQMKQLSMFPSDGWQ</sequence>
<dbReference type="EC" id="2.7.7.7" evidence="1"/>
<dbReference type="EMBL" id="CP001233">
    <property type="protein sequence ID" value="ACP06511.1"/>
    <property type="molecule type" value="Genomic_DNA"/>
</dbReference>
<dbReference type="RefSeq" id="WP_001153985.1">
    <property type="nucleotide sequence ID" value="NC_012578.1"/>
</dbReference>
<dbReference type="SMR" id="C3LQ59"/>
<dbReference type="KEGG" id="vcm:VCM66_2210"/>
<dbReference type="HOGENOM" id="CLU_012348_1_2_6"/>
<dbReference type="Proteomes" id="UP000001217">
    <property type="component" value="Chromosome I"/>
</dbReference>
<dbReference type="GO" id="GO:0005829">
    <property type="term" value="C:cytosol"/>
    <property type="evidence" value="ECO:0007669"/>
    <property type="project" value="TreeGrafter"/>
</dbReference>
<dbReference type="GO" id="GO:0003684">
    <property type="term" value="F:damaged DNA binding"/>
    <property type="evidence" value="ECO:0007669"/>
    <property type="project" value="InterPro"/>
</dbReference>
<dbReference type="GO" id="GO:0003887">
    <property type="term" value="F:DNA-directed DNA polymerase activity"/>
    <property type="evidence" value="ECO:0007669"/>
    <property type="project" value="UniProtKB-UniRule"/>
</dbReference>
<dbReference type="GO" id="GO:0000287">
    <property type="term" value="F:magnesium ion binding"/>
    <property type="evidence" value="ECO:0007669"/>
    <property type="project" value="UniProtKB-UniRule"/>
</dbReference>
<dbReference type="GO" id="GO:0006261">
    <property type="term" value="P:DNA-templated DNA replication"/>
    <property type="evidence" value="ECO:0007669"/>
    <property type="project" value="UniProtKB-UniRule"/>
</dbReference>
<dbReference type="GO" id="GO:0042276">
    <property type="term" value="P:error-prone translesion synthesis"/>
    <property type="evidence" value="ECO:0007669"/>
    <property type="project" value="TreeGrafter"/>
</dbReference>
<dbReference type="GO" id="GO:0009432">
    <property type="term" value="P:SOS response"/>
    <property type="evidence" value="ECO:0007669"/>
    <property type="project" value="TreeGrafter"/>
</dbReference>
<dbReference type="CDD" id="cd03586">
    <property type="entry name" value="PolY_Pol_IV_kappa"/>
    <property type="match status" value="1"/>
</dbReference>
<dbReference type="FunFam" id="3.30.1490.100:FF:000002">
    <property type="entry name" value="DNA polymerase IV"/>
    <property type="match status" value="1"/>
</dbReference>
<dbReference type="FunFam" id="3.30.70.270:FF:000002">
    <property type="entry name" value="DNA polymerase IV"/>
    <property type="match status" value="1"/>
</dbReference>
<dbReference type="FunFam" id="3.40.1170.60:FF:000001">
    <property type="entry name" value="DNA polymerase IV"/>
    <property type="match status" value="1"/>
</dbReference>
<dbReference type="Gene3D" id="3.30.70.270">
    <property type="match status" value="1"/>
</dbReference>
<dbReference type="Gene3D" id="3.40.1170.60">
    <property type="match status" value="1"/>
</dbReference>
<dbReference type="Gene3D" id="1.10.150.20">
    <property type="entry name" value="5' to 3' exonuclease, C-terminal subdomain"/>
    <property type="match status" value="1"/>
</dbReference>
<dbReference type="Gene3D" id="3.30.1490.100">
    <property type="entry name" value="DNA polymerase, Y-family, little finger domain"/>
    <property type="match status" value="1"/>
</dbReference>
<dbReference type="HAMAP" id="MF_01113">
    <property type="entry name" value="DNApol_IV"/>
    <property type="match status" value="1"/>
</dbReference>
<dbReference type="InterPro" id="IPR043502">
    <property type="entry name" value="DNA/RNA_pol_sf"/>
</dbReference>
<dbReference type="InterPro" id="IPR036775">
    <property type="entry name" value="DNA_pol_Y-fam_lit_finger_sf"/>
</dbReference>
<dbReference type="InterPro" id="IPR017961">
    <property type="entry name" value="DNA_pol_Y-fam_little_finger"/>
</dbReference>
<dbReference type="InterPro" id="IPR050116">
    <property type="entry name" value="DNA_polymerase-Y"/>
</dbReference>
<dbReference type="InterPro" id="IPR022880">
    <property type="entry name" value="DNApol_IV"/>
</dbReference>
<dbReference type="InterPro" id="IPR024728">
    <property type="entry name" value="PolY_HhH_motif"/>
</dbReference>
<dbReference type="InterPro" id="IPR043128">
    <property type="entry name" value="Rev_trsase/Diguanyl_cyclase"/>
</dbReference>
<dbReference type="InterPro" id="IPR001126">
    <property type="entry name" value="UmuC"/>
</dbReference>
<dbReference type="NCBIfam" id="NF002677">
    <property type="entry name" value="PRK02406.1"/>
    <property type="match status" value="1"/>
</dbReference>
<dbReference type="PANTHER" id="PTHR11076:SF33">
    <property type="entry name" value="DNA POLYMERASE KAPPA"/>
    <property type="match status" value="1"/>
</dbReference>
<dbReference type="PANTHER" id="PTHR11076">
    <property type="entry name" value="DNA REPAIR POLYMERASE UMUC / TRANSFERASE FAMILY MEMBER"/>
    <property type="match status" value="1"/>
</dbReference>
<dbReference type="Pfam" id="PF00817">
    <property type="entry name" value="IMS"/>
    <property type="match status" value="1"/>
</dbReference>
<dbReference type="Pfam" id="PF11799">
    <property type="entry name" value="IMS_C"/>
    <property type="match status" value="1"/>
</dbReference>
<dbReference type="Pfam" id="PF11798">
    <property type="entry name" value="IMS_HHH"/>
    <property type="match status" value="1"/>
</dbReference>
<dbReference type="SUPFAM" id="SSF56672">
    <property type="entry name" value="DNA/RNA polymerases"/>
    <property type="match status" value="1"/>
</dbReference>
<dbReference type="SUPFAM" id="SSF100879">
    <property type="entry name" value="Lesion bypass DNA polymerase (Y-family), little finger domain"/>
    <property type="match status" value="1"/>
</dbReference>
<dbReference type="PROSITE" id="PS50173">
    <property type="entry name" value="UMUC"/>
    <property type="match status" value="1"/>
</dbReference>
<comment type="function">
    <text evidence="1">Poorly processive, error-prone DNA polymerase involved in untargeted mutagenesis. Copies undamaged DNA at stalled replication forks, which arise in vivo from mismatched or misaligned primer ends. These misaligned primers can be extended by PolIV. Exhibits no 3'-5' exonuclease (proofreading) activity. May be involved in translesional synthesis, in conjunction with the beta clamp from PolIII.</text>
</comment>
<comment type="catalytic activity">
    <reaction evidence="1">
        <text>DNA(n) + a 2'-deoxyribonucleoside 5'-triphosphate = DNA(n+1) + diphosphate</text>
        <dbReference type="Rhea" id="RHEA:22508"/>
        <dbReference type="Rhea" id="RHEA-COMP:17339"/>
        <dbReference type="Rhea" id="RHEA-COMP:17340"/>
        <dbReference type="ChEBI" id="CHEBI:33019"/>
        <dbReference type="ChEBI" id="CHEBI:61560"/>
        <dbReference type="ChEBI" id="CHEBI:173112"/>
        <dbReference type="EC" id="2.7.7.7"/>
    </reaction>
</comment>
<comment type="cofactor">
    <cofactor evidence="1">
        <name>Mg(2+)</name>
        <dbReference type="ChEBI" id="CHEBI:18420"/>
    </cofactor>
    <text evidence="1">Binds 2 magnesium ions per subunit.</text>
</comment>
<comment type="subunit">
    <text evidence="1">Monomer.</text>
</comment>
<comment type="subcellular location">
    <subcellularLocation>
        <location evidence="1">Cytoplasm</location>
    </subcellularLocation>
</comment>
<comment type="similarity">
    <text evidence="1">Belongs to the DNA polymerase type-Y family.</text>
</comment>
<organism>
    <name type="scientific">Vibrio cholerae serotype O1 (strain M66-2)</name>
    <dbReference type="NCBI Taxonomy" id="579112"/>
    <lineage>
        <taxon>Bacteria</taxon>
        <taxon>Pseudomonadati</taxon>
        <taxon>Pseudomonadota</taxon>
        <taxon>Gammaproteobacteria</taxon>
        <taxon>Vibrionales</taxon>
        <taxon>Vibrionaceae</taxon>
        <taxon>Vibrio</taxon>
    </lineage>
</organism>